<reference key="1">
    <citation type="journal article" date="2002" name="DNA Res.">
        <title>Complete genomic sequence of nitrogen-fixing symbiotic bacterium Bradyrhizobium japonicum USDA110.</title>
        <authorList>
            <person name="Kaneko T."/>
            <person name="Nakamura Y."/>
            <person name="Sato S."/>
            <person name="Minamisawa K."/>
            <person name="Uchiumi T."/>
            <person name="Sasamoto S."/>
            <person name="Watanabe A."/>
            <person name="Idesawa K."/>
            <person name="Iriguchi M."/>
            <person name="Kawashima K."/>
            <person name="Kohara M."/>
            <person name="Matsumoto M."/>
            <person name="Shimpo S."/>
            <person name="Tsuruoka H."/>
            <person name="Wada T."/>
            <person name="Yamada M."/>
            <person name="Tabata S."/>
        </authorList>
    </citation>
    <scope>NUCLEOTIDE SEQUENCE [LARGE SCALE GENOMIC DNA]</scope>
    <source>
        <strain>JCM 10833 / BCRC 13528 / IAM 13628 / NBRC 14792 / USDA 110</strain>
    </source>
</reference>
<feature type="chain" id="PRO_0000172185" description="Homoserine kinase">
    <location>
        <begin position="1"/>
        <end position="327"/>
    </location>
</feature>
<gene>
    <name evidence="1" type="primary">thrB</name>
    <name type="ordered locus">blr1315</name>
</gene>
<accession>Q89UU4</accession>
<name>KHSE_BRADU</name>
<evidence type="ECO:0000255" key="1">
    <source>
        <dbReference type="HAMAP-Rule" id="MF_00301"/>
    </source>
</evidence>
<keyword id="KW-0028">Amino-acid biosynthesis</keyword>
<keyword id="KW-0067">ATP-binding</keyword>
<keyword id="KW-0418">Kinase</keyword>
<keyword id="KW-0547">Nucleotide-binding</keyword>
<keyword id="KW-1185">Reference proteome</keyword>
<keyword id="KW-0791">Threonine biosynthesis</keyword>
<keyword id="KW-0808">Transferase</keyword>
<sequence>MAVYTDVAADELADFLSQYDLGELLSYKGIAEGVENSNFLLHTTKGSFILTLYEKRVAKNDLPFFLALMTHLAEHGVNCPLPVKGRDGEALRELSGRPAAIITFLEGVWPRKPNAAHCAGVGEGLARMHLAGANFAIRRANALSVAGWRPLFDAAASRADEVQPGLRAFLAAELDYLASGVWPTNLPEGVIHADLFNDNVFFLGDKLSGIIDFTFACNDMLAYDVAICLNAWCFEPDHSFNVTKARAFLNAYGRVRKLSEAEEAALPLLARGAAIRFLLTRLVDWLNVPPGALVRPKDPLEYVRKLRFHQSVSSVRDYGLMPSGLVA</sequence>
<organism>
    <name type="scientific">Bradyrhizobium diazoefficiens (strain JCM 10833 / BCRC 13528 / IAM 13628 / NBRC 14792 / USDA 110)</name>
    <dbReference type="NCBI Taxonomy" id="224911"/>
    <lineage>
        <taxon>Bacteria</taxon>
        <taxon>Pseudomonadati</taxon>
        <taxon>Pseudomonadota</taxon>
        <taxon>Alphaproteobacteria</taxon>
        <taxon>Hyphomicrobiales</taxon>
        <taxon>Nitrobacteraceae</taxon>
        <taxon>Bradyrhizobium</taxon>
    </lineage>
</organism>
<protein>
    <recommendedName>
        <fullName evidence="1">Homoserine kinase</fullName>
        <shortName evidence="1">HK</shortName>
        <shortName evidence="1">HSK</shortName>
        <ecNumber evidence="1">2.7.1.39</ecNumber>
    </recommendedName>
</protein>
<comment type="catalytic activity">
    <reaction evidence="1">
        <text>L-homoserine + ATP = O-phospho-L-homoserine + ADP + H(+)</text>
        <dbReference type="Rhea" id="RHEA:13985"/>
        <dbReference type="ChEBI" id="CHEBI:15378"/>
        <dbReference type="ChEBI" id="CHEBI:30616"/>
        <dbReference type="ChEBI" id="CHEBI:57476"/>
        <dbReference type="ChEBI" id="CHEBI:57590"/>
        <dbReference type="ChEBI" id="CHEBI:456216"/>
        <dbReference type="EC" id="2.7.1.39"/>
    </reaction>
</comment>
<comment type="pathway">
    <text evidence="1">Amino-acid biosynthesis; L-threonine biosynthesis; L-threonine from L-aspartate: step 4/5.</text>
</comment>
<comment type="similarity">
    <text evidence="1">Belongs to the pseudomonas-type ThrB family.</text>
</comment>
<dbReference type="EC" id="2.7.1.39" evidence="1"/>
<dbReference type="EMBL" id="BA000040">
    <property type="protein sequence ID" value="BAC46580.1"/>
    <property type="molecule type" value="Genomic_DNA"/>
</dbReference>
<dbReference type="RefSeq" id="NP_767955.1">
    <property type="nucleotide sequence ID" value="NC_004463.1"/>
</dbReference>
<dbReference type="RefSeq" id="WP_011084133.1">
    <property type="nucleotide sequence ID" value="NC_004463.1"/>
</dbReference>
<dbReference type="SMR" id="Q89UU4"/>
<dbReference type="STRING" id="224911.AAV28_03465"/>
<dbReference type="EnsemblBacteria" id="BAC46580">
    <property type="protein sequence ID" value="BAC46580"/>
    <property type="gene ID" value="BAC46580"/>
</dbReference>
<dbReference type="GeneID" id="46488583"/>
<dbReference type="KEGG" id="bja:blr1315"/>
<dbReference type="PATRIC" id="fig|224911.44.peg.730"/>
<dbReference type="eggNOG" id="COG2334">
    <property type="taxonomic scope" value="Bacteria"/>
</dbReference>
<dbReference type="HOGENOM" id="CLU_053300_1_0_5"/>
<dbReference type="InParanoid" id="Q89UU4"/>
<dbReference type="OrthoDB" id="9777460at2"/>
<dbReference type="PhylomeDB" id="Q89UU4"/>
<dbReference type="UniPathway" id="UPA00050">
    <property type="reaction ID" value="UER00064"/>
</dbReference>
<dbReference type="Proteomes" id="UP000002526">
    <property type="component" value="Chromosome"/>
</dbReference>
<dbReference type="GO" id="GO:0005524">
    <property type="term" value="F:ATP binding"/>
    <property type="evidence" value="ECO:0007669"/>
    <property type="project" value="UniProtKB-KW"/>
</dbReference>
<dbReference type="GO" id="GO:0004413">
    <property type="term" value="F:homoserine kinase activity"/>
    <property type="evidence" value="ECO:0000318"/>
    <property type="project" value="GO_Central"/>
</dbReference>
<dbReference type="GO" id="GO:0009088">
    <property type="term" value="P:threonine biosynthetic process"/>
    <property type="evidence" value="ECO:0000318"/>
    <property type="project" value="GO_Central"/>
</dbReference>
<dbReference type="CDD" id="cd05153">
    <property type="entry name" value="HomoserineK_II"/>
    <property type="match status" value="1"/>
</dbReference>
<dbReference type="FunFam" id="3.90.1200.10:FF:000041">
    <property type="entry name" value="Homoserine kinase"/>
    <property type="match status" value="1"/>
</dbReference>
<dbReference type="Gene3D" id="3.90.1200.10">
    <property type="match status" value="1"/>
</dbReference>
<dbReference type="Gene3D" id="3.30.200.20">
    <property type="entry name" value="Phosphorylase Kinase, domain 1"/>
    <property type="match status" value="1"/>
</dbReference>
<dbReference type="HAMAP" id="MF_00301">
    <property type="entry name" value="Homoser_kinase_2"/>
    <property type="match status" value="1"/>
</dbReference>
<dbReference type="InterPro" id="IPR002575">
    <property type="entry name" value="Aminoglycoside_PTrfase"/>
</dbReference>
<dbReference type="InterPro" id="IPR005280">
    <property type="entry name" value="Homoserine_kinase_II"/>
</dbReference>
<dbReference type="InterPro" id="IPR011009">
    <property type="entry name" value="Kinase-like_dom_sf"/>
</dbReference>
<dbReference type="InterPro" id="IPR050249">
    <property type="entry name" value="Pseudomonas-type_ThrB"/>
</dbReference>
<dbReference type="NCBIfam" id="NF003558">
    <property type="entry name" value="PRK05231.1"/>
    <property type="match status" value="1"/>
</dbReference>
<dbReference type="NCBIfam" id="TIGR00938">
    <property type="entry name" value="thrB_alt"/>
    <property type="match status" value="1"/>
</dbReference>
<dbReference type="PANTHER" id="PTHR21064:SF6">
    <property type="entry name" value="AMINOGLYCOSIDE PHOSPHOTRANSFERASE DOMAIN-CONTAINING PROTEIN"/>
    <property type="match status" value="1"/>
</dbReference>
<dbReference type="PANTHER" id="PTHR21064">
    <property type="entry name" value="AMINOGLYCOSIDE PHOSPHOTRANSFERASE DOMAIN-CONTAINING PROTEIN-RELATED"/>
    <property type="match status" value="1"/>
</dbReference>
<dbReference type="Pfam" id="PF01636">
    <property type="entry name" value="APH"/>
    <property type="match status" value="1"/>
</dbReference>
<dbReference type="SUPFAM" id="SSF56112">
    <property type="entry name" value="Protein kinase-like (PK-like)"/>
    <property type="match status" value="1"/>
</dbReference>
<proteinExistence type="inferred from homology"/>